<feature type="chain" id="PRO_1000080239" description="Large ribosomal subunit protein bL34">
    <location>
        <begin position="1"/>
        <end position="44"/>
    </location>
</feature>
<dbReference type="EMBL" id="AM260525">
    <property type="protein sequence ID" value="CAK02155.1"/>
    <property type="molecule type" value="Genomic_DNA"/>
</dbReference>
<dbReference type="RefSeq" id="WP_005864709.1">
    <property type="nucleotide sequence ID" value="NC_010161.1"/>
</dbReference>
<dbReference type="SMR" id="A9IXD6"/>
<dbReference type="GeneID" id="71061799"/>
<dbReference type="KEGG" id="btr:BT_1887"/>
<dbReference type="eggNOG" id="COG0230">
    <property type="taxonomic scope" value="Bacteria"/>
</dbReference>
<dbReference type="HOGENOM" id="CLU_129938_2_0_5"/>
<dbReference type="Proteomes" id="UP000001592">
    <property type="component" value="Chromosome"/>
</dbReference>
<dbReference type="GO" id="GO:1990904">
    <property type="term" value="C:ribonucleoprotein complex"/>
    <property type="evidence" value="ECO:0007669"/>
    <property type="project" value="UniProtKB-KW"/>
</dbReference>
<dbReference type="GO" id="GO:0005840">
    <property type="term" value="C:ribosome"/>
    <property type="evidence" value="ECO:0007669"/>
    <property type="project" value="UniProtKB-KW"/>
</dbReference>
<dbReference type="GO" id="GO:0003735">
    <property type="term" value="F:structural constituent of ribosome"/>
    <property type="evidence" value="ECO:0007669"/>
    <property type="project" value="InterPro"/>
</dbReference>
<dbReference type="GO" id="GO:0006412">
    <property type="term" value="P:translation"/>
    <property type="evidence" value="ECO:0007669"/>
    <property type="project" value="UniProtKB-UniRule"/>
</dbReference>
<dbReference type="FunFam" id="1.10.287.3980:FF:000001">
    <property type="entry name" value="Mitochondrial ribosomal protein L34"/>
    <property type="match status" value="1"/>
</dbReference>
<dbReference type="Gene3D" id="1.10.287.3980">
    <property type="match status" value="1"/>
</dbReference>
<dbReference type="HAMAP" id="MF_00391">
    <property type="entry name" value="Ribosomal_bL34"/>
    <property type="match status" value="1"/>
</dbReference>
<dbReference type="InterPro" id="IPR000271">
    <property type="entry name" value="Ribosomal_bL34"/>
</dbReference>
<dbReference type="InterPro" id="IPR020939">
    <property type="entry name" value="Ribosomal_bL34_CS"/>
</dbReference>
<dbReference type="NCBIfam" id="TIGR01030">
    <property type="entry name" value="rpmH_bact"/>
    <property type="match status" value="1"/>
</dbReference>
<dbReference type="PANTHER" id="PTHR14503:SF4">
    <property type="entry name" value="LARGE RIBOSOMAL SUBUNIT PROTEIN BL34M"/>
    <property type="match status" value="1"/>
</dbReference>
<dbReference type="PANTHER" id="PTHR14503">
    <property type="entry name" value="MITOCHONDRIAL RIBOSOMAL PROTEIN 34 FAMILY MEMBER"/>
    <property type="match status" value="1"/>
</dbReference>
<dbReference type="Pfam" id="PF00468">
    <property type="entry name" value="Ribosomal_L34"/>
    <property type="match status" value="1"/>
</dbReference>
<dbReference type="PROSITE" id="PS00784">
    <property type="entry name" value="RIBOSOMAL_L34"/>
    <property type="match status" value="1"/>
</dbReference>
<organism>
    <name type="scientific">Bartonella tribocorum (strain CIP 105476 / IBS 506)</name>
    <dbReference type="NCBI Taxonomy" id="382640"/>
    <lineage>
        <taxon>Bacteria</taxon>
        <taxon>Pseudomonadati</taxon>
        <taxon>Pseudomonadota</taxon>
        <taxon>Alphaproteobacteria</taxon>
        <taxon>Hyphomicrobiales</taxon>
        <taxon>Bartonellaceae</taxon>
        <taxon>Bartonella</taxon>
    </lineage>
</organism>
<reference key="1">
    <citation type="journal article" date="2007" name="Nat. Genet.">
        <title>Genomic analysis of Bartonella identifies type IV secretion systems as host adaptability factors.</title>
        <authorList>
            <person name="Saenz H.L."/>
            <person name="Engel P."/>
            <person name="Stoeckli M.C."/>
            <person name="Lanz C."/>
            <person name="Raddatz G."/>
            <person name="Vayssier-Taussat M."/>
            <person name="Birtles R."/>
            <person name="Schuster S.C."/>
            <person name="Dehio C."/>
        </authorList>
    </citation>
    <scope>NUCLEOTIDE SEQUENCE [LARGE SCALE GENOMIC DNA]</scope>
    <source>
        <strain>CIP 105476 / IBS 506</strain>
    </source>
</reference>
<sequence>MKRTYQPSKLVRKRRHGFRARMATAGGRKVIAARRARGRKRLSA</sequence>
<comment type="similarity">
    <text evidence="1">Belongs to the bacterial ribosomal protein bL34 family.</text>
</comment>
<protein>
    <recommendedName>
        <fullName evidence="1">Large ribosomal subunit protein bL34</fullName>
    </recommendedName>
    <alternativeName>
        <fullName evidence="2">50S ribosomal protein L34</fullName>
    </alternativeName>
</protein>
<evidence type="ECO:0000255" key="1">
    <source>
        <dbReference type="HAMAP-Rule" id="MF_00391"/>
    </source>
</evidence>
<evidence type="ECO:0000305" key="2"/>
<name>RL34_BART1</name>
<proteinExistence type="inferred from homology"/>
<accession>A9IXD6</accession>
<gene>
    <name evidence="1" type="primary">rpmH</name>
    <name type="ordered locus">BT_1887</name>
</gene>
<keyword id="KW-0687">Ribonucleoprotein</keyword>
<keyword id="KW-0689">Ribosomal protein</keyword>